<keyword id="KW-0408">Iron</keyword>
<keyword id="KW-0411">Iron-sulfur</keyword>
<keyword id="KW-0479">Metal-binding</keyword>
<keyword id="KW-0663">Pyridoxal phosphate</keyword>
<keyword id="KW-1185">Reference proteome</keyword>
<keyword id="KW-0808">Transferase</keyword>
<proteinExistence type="inferred from homology"/>
<name>NIFS_HALH5</name>
<sequence length="375" mass="41934">MIYLDYCATTPMSDYVKDVYVTVASQFYGNPNSLHDVGYEASNILEQCKRQIANLLHIDPAGIFFTGSASEANFLTIVSLALAHRRKGRHLITTKCEHPSVLSTFRYLESQQFDVSYVPVNRYGQVSVDALMGTIREDTILVSIAHSQSVLGTIQSLETFAEPLVTYDILFHSDCTQSIGKVDVPIRQLHSLTMSGHKINGPKGIGLAYVDPAIQWEPFLSGVTQQSGFRQGTVDIPSVAAFTAAIEESFQHRTAYDQHITKLHHQFKEKMMEWPMILEGHPSNRLKHHFGLRLHGMEGQFVMLEANRAGFAISTGTACSSSHHEPDPVFAAIGRTKEEADQFFRVSFGISTTEQEFNAFIDFLQQLIDRKGEPM</sequence>
<organism>
    <name type="scientific">Halalkalibacterium halodurans (strain ATCC BAA-125 / DSM 18197 / FERM 7344 / JCM 9153 / C-125)</name>
    <name type="common">Bacillus halodurans</name>
    <dbReference type="NCBI Taxonomy" id="272558"/>
    <lineage>
        <taxon>Bacteria</taxon>
        <taxon>Bacillati</taxon>
        <taxon>Bacillota</taxon>
        <taxon>Bacilli</taxon>
        <taxon>Bacillales</taxon>
        <taxon>Bacillaceae</taxon>
        <taxon>Halalkalibacterium (ex Joshi et al. 2022)</taxon>
    </lineage>
</organism>
<dbReference type="EC" id="2.8.1.7" evidence="2"/>
<dbReference type="EMBL" id="BA000004">
    <property type="protein sequence ID" value="BAB04936.1"/>
    <property type="molecule type" value="Genomic_DNA"/>
</dbReference>
<dbReference type="PIR" id="A83802">
    <property type="entry name" value="A83802"/>
</dbReference>
<dbReference type="RefSeq" id="WP_010897385.1">
    <property type="nucleotide sequence ID" value="NC_002570.2"/>
</dbReference>
<dbReference type="SMR" id="Q9KDJ6"/>
<dbReference type="STRING" id="272558.gene:10727111"/>
<dbReference type="KEGG" id="bha:BH1217"/>
<dbReference type="eggNOG" id="COG1104">
    <property type="taxonomic scope" value="Bacteria"/>
</dbReference>
<dbReference type="HOGENOM" id="CLU_003433_0_0_9"/>
<dbReference type="OrthoDB" id="9808002at2"/>
<dbReference type="Proteomes" id="UP000001258">
    <property type="component" value="Chromosome"/>
</dbReference>
<dbReference type="GO" id="GO:0031071">
    <property type="term" value="F:cysteine desulfurase activity"/>
    <property type="evidence" value="ECO:0007669"/>
    <property type="project" value="UniProtKB-EC"/>
</dbReference>
<dbReference type="GO" id="GO:0051536">
    <property type="term" value="F:iron-sulfur cluster binding"/>
    <property type="evidence" value="ECO:0007669"/>
    <property type="project" value="UniProtKB-KW"/>
</dbReference>
<dbReference type="GO" id="GO:0046872">
    <property type="term" value="F:metal ion binding"/>
    <property type="evidence" value="ECO:0007669"/>
    <property type="project" value="UniProtKB-KW"/>
</dbReference>
<dbReference type="Gene3D" id="3.90.1150.10">
    <property type="entry name" value="Aspartate Aminotransferase, domain 1"/>
    <property type="match status" value="1"/>
</dbReference>
<dbReference type="Gene3D" id="3.40.640.10">
    <property type="entry name" value="Type I PLP-dependent aspartate aminotransferase-like (Major domain)"/>
    <property type="match status" value="1"/>
</dbReference>
<dbReference type="InterPro" id="IPR000192">
    <property type="entry name" value="Aminotrans_V_dom"/>
</dbReference>
<dbReference type="InterPro" id="IPR016454">
    <property type="entry name" value="Cysteine_dSase"/>
</dbReference>
<dbReference type="InterPro" id="IPR015424">
    <property type="entry name" value="PyrdxlP-dep_Trfase"/>
</dbReference>
<dbReference type="InterPro" id="IPR015421">
    <property type="entry name" value="PyrdxlP-dep_Trfase_major"/>
</dbReference>
<dbReference type="InterPro" id="IPR015422">
    <property type="entry name" value="PyrdxlP-dep_Trfase_small"/>
</dbReference>
<dbReference type="NCBIfam" id="NF002806">
    <property type="entry name" value="PRK02948.1"/>
    <property type="match status" value="1"/>
</dbReference>
<dbReference type="PANTHER" id="PTHR11601:SF36">
    <property type="entry name" value="CYSTEINE DESULFURASE NIFS-RELATED"/>
    <property type="match status" value="1"/>
</dbReference>
<dbReference type="PANTHER" id="PTHR11601">
    <property type="entry name" value="CYSTEINE DESULFURYLASE FAMILY MEMBER"/>
    <property type="match status" value="1"/>
</dbReference>
<dbReference type="Pfam" id="PF00266">
    <property type="entry name" value="Aminotran_5"/>
    <property type="match status" value="1"/>
</dbReference>
<dbReference type="PIRSF" id="PIRSF005572">
    <property type="entry name" value="NifS"/>
    <property type="match status" value="1"/>
</dbReference>
<dbReference type="SUPFAM" id="SSF53383">
    <property type="entry name" value="PLP-dependent transferases"/>
    <property type="match status" value="1"/>
</dbReference>
<evidence type="ECO:0000250" key="1">
    <source>
        <dbReference type="UniProtKB" id="O29689"/>
    </source>
</evidence>
<evidence type="ECO:0000250" key="2">
    <source>
        <dbReference type="UniProtKB" id="P05341"/>
    </source>
</evidence>
<evidence type="ECO:0000250" key="3">
    <source>
        <dbReference type="UniProtKB" id="P0A6B9"/>
    </source>
</evidence>
<evidence type="ECO:0000305" key="4"/>
<protein>
    <recommendedName>
        <fullName evidence="4">Putative cysteine desulfurase NifS</fullName>
        <ecNumber evidence="2">2.8.1.7</ecNumber>
    </recommendedName>
</protein>
<reference key="1">
    <citation type="journal article" date="2000" name="Nucleic Acids Res.">
        <title>Complete genome sequence of the alkaliphilic bacterium Bacillus halodurans and genomic sequence comparison with Bacillus subtilis.</title>
        <authorList>
            <person name="Takami H."/>
            <person name="Nakasone K."/>
            <person name="Takaki Y."/>
            <person name="Maeno G."/>
            <person name="Sasaki R."/>
            <person name="Masui N."/>
            <person name="Fuji F."/>
            <person name="Hirama C."/>
            <person name="Nakamura Y."/>
            <person name="Ogasawara N."/>
            <person name="Kuhara S."/>
            <person name="Horikoshi K."/>
        </authorList>
    </citation>
    <scope>NUCLEOTIDE SEQUENCE [LARGE SCALE GENOMIC DNA]</scope>
    <source>
        <strain>ATCC BAA-125 / DSM 18197 / FERM 7344 / JCM 9153 / C-125</strain>
    </source>
</reference>
<comment type="function">
    <text evidence="2">Catalyzes the removal of elemental sulfur from cysteine to produce alanine.</text>
</comment>
<comment type="catalytic activity">
    <reaction evidence="2">
        <text>(sulfur carrier)-H + L-cysteine = (sulfur carrier)-SH + L-alanine</text>
        <dbReference type="Rhea" id="RHEA:43892"/>
        <dbReference type="Rhea" id="RHEA-COMP:14737"/>
        <dbReference type="Rhea" id="RHEA-COMP:14739"/>
        <dbReference type="ChEBI" id="CHEBI:29917"/>
        <dbReference type="ChEBI" id="CHEBI:35235"/>
        <dbReference type="ChEBI" id="CHEBI:57972"/>
        <dbReference type="ChEBI" id="CHEBI:64428"/>
        <dbReference type="EC" id="2.8.1.7"/>
    </reaction>
</comment>
<comment type="cofactor">
    <cofactor evidence="2">
        <name>pyridoxal 5'-phosphate</name>
        <dbReference type="ChEBI" id="CHEBI:597326"/>
    </cofactor>
</comment>
<comment type="similarity">
    <text evidence="4">Belongs to the class-V pyridoxal-phosphate-dependent aminotransferase family. NifS/IscS subfamily.</text>
</comment>
<feature type="chain" id="PRO_0000150285" description="Putative cysteine desulfurase NifS">
    <location>
        <begin position="1"/>
        <end position="375"/>
    </location>
</feature>
<feature type="active site" description="Cysteine persulfide intermediate" evidence="2">
    <location>
        <position position="319"/>
    </location>
</feature>
<feature type="binding site" evidence="3">
    <location>
        <begin position="69"/>
        <end position="70"/>
    </location>
    <ligand>
        <name>pyridoxal 5'-phosphate</name>
        <dbReference type="ChEBI" id="CHEBI:597326"/>
    </ligand>
</feature>
<feature type="binding site" evidence="3">
    <location>
        <position position="177"/>
    </location>
    <ligand>
        <name>pyridoxal 5'-phosphate</name>
        <dbReference type="ChEBI" id="CHEBI:597326"/>
    </ligand>
</feature>
<feature type="binding site" evidence="3">
    <location>
        <begin position="195"/>
        <end position="197"/>
    </location>
    <ligand>
        <name>pyridoxal 5'-phosphate</name>
        <dbReference type="ChEBI" id="CHEBI:597326"/>
    </ligand>
</feature>
<feature type="binding site" evidence="3">
    <location>
        <position position="233"/>
    </location>
    <ligand>
        <name>pyridoxal 5'-phosphate</name>
        <dbReference type="ChEBI" id="CHEBI:597326"/>
    </ligand>
</feature>
<feature type="binding site" description="via persulfide group" evidence="1">
    <location>
        <position position="319"/>
    </location>
    <ligand>
        <name>[2Fe-2S] cluster</name>
        <dbReference type="ChEBI" id="CHEBI:190135"/>
    </ligand>
</feature>
<feature type="modified residue" description="N6-(pyridoxal phosphate)lysine" evidence="3">
    <location>
        <position position="198"/>
    </location>
</feature>
<accession>Q9KDJ6</accession>
<gene>
    <name type="primary">nifS</name>
    <name type="synonym">iscS</name>
    <name type="ordered locus">BH1217</name>
</gene>